<gene>
    <name evidence="9" type="primary">Rnf145</name>
</gene>
<sequence length="663" mass="74648">MAAKEKLEAVLNVALRVPSIMLLDVLYRWDVSSFFQQIQRSSLNNNPLFQYKYLALNMHYVGYILSVVLLTLPRQHLVQLYLYFVTALLLYAGHQISRDYVRSELESAYEGPMYLEPLSMNRFTTALIGQLVVCTLCSCVMKTKQIWLFSAHMLPLLARLCLVPLETIVIINKFAMIFTGLEVLYFLGSNLLVPYNLAKSAYRELVQVVEVYGLLALGMSLWNQLVVPVLFMVFWLVLFALQIYSYFSTRDQPASRERLLFLFLTSIAECCSTPYSLLGLVFTVSFVALGVLTLCKFYLQGYRAFMNDPAMNRGMTEGVTLLILAVQTGLIELQVVHRAFLLSIILFIVVASILQSMLEIADPIVLALGASRDKSLWKHFRAVSLCLFLLVFPAYMAYMICQFFHMDFWLLIIISSSILTSLQVLGTLFIYVLFMVEEFRKEPVENMDDVIYYVNGTYRLLEFVVALCVVAYGVSETIFGEWTVMGSMIIFIHSYYNVWLRAQLGWKSFLLRRDAVNKIKSLPVATQEQLEKHNDICAICYQDMKSAVITPCSHFFHAGCLKKWLYVQDTCPLCHCHLKNSSQLPGLGTEAAPQPPAGAEQNIVLQEGPEPPDHESPPGTGTQEGSGDSSEHINRGSASQEGAADAGEGPQIPEGEVCPVESA</sequence>
<reference key="1">
    <citation type="journal article" date="2005" name="Science">
        <title>The transcriptional landscape of the mammalian genome.</title>
        <authorList>
            <person name="Carninci P."/>
            <person name="Kasukawa T."/>
            <person name="Katayama S."/>
            <person name="Gough J."/>
            <person name="Frith M.C."/>
            <person name="Maeda N."/>
            <person name="Oyama R."/>
            <person name="Ravasi T."/>
            <person name="Lenhard B."/>
            <person name="Wells C."/>
            <person name="Kodzius R."/>
            <person name="Shimokawa K."/>
            <person name="Bajic V.B."/>
            <person name="Brenner S.E."/>
            <person name="Batalov S."/>
            <person name="Forrest A.R."/>
            <person name="Zavolan M."/>
            <person name="Davis M.J."/>
            <person name="Wilming L.G."/>
            <person name="Aidinis V."/>
            <person name="Allen J.E."/>
            <person name="Ambesi-Impiombato A."/>
            <person name="Apweiler R."/>
            <person name="Aturaliya R.N."/>
            <person name="Bailey T.L."/>
            <person name="Bansal M."/>
            <person name="Baxter L."/>
            <person name="Beisel K.W."/>
            <person name="Bersano T."/>
            <person name="Bono H."/>
            <person name="Chalk A.M."/>
            <person name="Chiu K.P."/>
            <person name="Choudhary V."/>
            <person name="Christoffels A."/>
            <person name="Clutterbuck D.R."/>
            <person name="Crowe M.L."/>
            <person name="Dalla E."/>
            <person name="Dalrymple B.P."/>
            <person name="de Bono B."/>
            <person name="Della Gatta G."/>
            <person name="di Bernardo D."/>
            <person name="Down T."/>
            <person name="Engstrom P."/>
            <person name="Fagiolini M."/>
            <person name="Faulkner G."/>
            <person name="Fletcher C.F."/>
            <person name="Fukushima T."/>
            <person name="Furuno M."/>
            <person name="Futaki S."/>
            <person name="Gariboldi M."/>
            <person name="Georgii-Hemming P."/>
            <person name="Gingeras T.R."/>
            <person name="Gojobori T."/>
            <person name="Green R.E."/>
            <person name="Gustincich S."/>
            <person name="Harbers M."/>
            <person name="Hayashi Y."/>
            <person name="Hensch T.K."/>
            <person name="Hirokawa N."/>
            <person name="Hill D."/>
            <person name="Huminiecki L."/>
            <person name="Iacono M."/>
            <person name="Ikeo K."/>
            <person name="Iwama A."/>
            <person name="Ishikawa T."/>
            <person name="Jakt M."/>
            <person name="Kanapin A."/>
            <person name="Katoh M."/>
            <person name="Kawasawa Y."/>
            <person name="Kelso J."/>
            <person name="Kitamura H."/>
            <person name="Kitano H."/>
            <person name="Kollias G."/>
            <person name="Krishnan S.P."/>
            <person name="Kruger A."/>
            <person name="Kummerfeld S.K."/>
            <person name="Kurochkin I.V."/>
            <person name="Lareau L.F."/>
            <person name="Lazarevic D."/>
            <person name="Lipovich L."/>
            <person name="Liu J."/>
            <person name="Liuni S."/>
            <person name="McWilliam S."/>
            <person name="Madan Babu M."/>
            <person name="Madera M."/>
            <person name="Marchionni L."/>
            <person name="Matsuda H."/>
            <person name="Matsuzawa S."/>
            <person name="Miki H."/>
            <person name="Mignone F."/>
            <person name="Miyake S."/>
            <person name="Morris K."/>
            <person name="Mottagui-Tabar S."/>
            <person name="Mulder N."/>
            <person name="Nakano N."/>
            <person name="Nakauchi H."/>
            <person name="Ng P."/>
            <person name="Nilsson R."/>
            <person name="Nishiguchi S."/>
            <person name="Nishikawa S."/>
            <person name="Nori F."/>
            <person name="Ohara O."/>
            <person name="Okazaki Y."/>
            <person name="Orlando V."/>
            <person name="Pang K.C."/>
            <person name="Pavan W.J."/>
            <person name="Pavesi G."/>
            <person name="Pesole G."/>
            <person name="Petrovsky N."/>
            <person name="Piazza S."/>
            <person name="Reed J."/>
            <person name="Reid J.F."/>
            <person name="Ring B.Z."/>
            <person name="Ringwald M."/>
            <person name="Rost B."/>
            <person name="Ruan Y."/>
            <person name="Salzberg S.L."/>
            <person name="Sandelin A."/>
            <person name="Schneider C."/>
            <person name="Schoenbach C."/>
            <person name="Sekiguchi K."/>
            <person name="Semple C.A."/>
            <person name="Seno S."/>
            <person name="Sessa L."/>
            <person name="Sheng Y."/>
            <person name="Shibata Y."/>
            <person name="Shimada H."/>
            <person name="Shimada K."/>
            <person name="Silva D."/>
            <person name="Sinclair B."/>
            <person name="Sperling S."/>
            <person name="Stupka E."/>
            <person name="Sugiura K."/>
            <person name="Sultana R."/>
            <person name="Takenaka Y."/>
            <person name="Taki K."/>
            <person name="Tammoja K."/>
            <person name="Tan S.L."/>
            <person name="Tang S."/>
            <person name="Taylor M.S."/>
            <person name="Tegner J."/>
            <person name="Teichmann S.A."/>
            <person name="Ueda H.R."/>
            <person name="van Nimwegen E."/>
            <person name="Verardo R."/>
            <person name="Wei C.L."/>
            <person name="Yagi K."/>
            <person name="Yamanishi H."/>
            <person name="Zabarovsky E."/>
            <person name="Zhu S."/>
            <person name="Zimmer A."/>
            <person name="Hide W."/>
            <person name="Bult C."/>
            <person name="Grimmond S.M."/>
            <person name="Teasdale R.D."/>
            <person name="Liu E.T."/>
            <person name="Brusic V."/>
            <person name="Quackenbush J."/>
            <person name="Wahlestedt C."/>
            <person name="Mattick J.S."/>
            <person name="Hume D.A."/>
            <person name="Kai C."/>
            <person name="Sasaki D."/>
            <person name="Tomaru Y."/>
            <person name="Fukuda S."/>
            <person name="Kanamori-Katayama M."/>
            <person name="Suzuki M."/>
            <person name="Aoki J."/>
            <person name="Arakawa T."/>
            <person name="Iida J."/>
            <person name="Imamura K."/>
            <person name="Itoh M."/>
            <person name="Kato T."/>
            <person name="Kawaji H."/>
            <person name="Kawagashira N."/>
            <person name="Kawashima T."/>
            <person name="Kojima M."/>
            <person name="Kondo S."/>
            <person name="Konno H."/>
            <person name="Nakano K."/>
            <person name="Ninomiya N."/>
            <person name="Nishio T."/>
            <person name="Okada M."/>
            <person name="Plessy C."/>
            <person name="Shibata K."/>
            <person name="Shiraki T."/>
            <person name="Suzuki S."/>
            <person name="Tagami M."/>
            <person name="Waki K."/>
            <person name="Watahiki A."/>
            <person name="Okamura-Oho Y."/>
            <person name="Suzuki H."/>
            <person name="Kawai J."/>
            <person name="Hayashizaki Y."/>
        </authorList>
    </citation>
    <scope>NUCLEOTIDE SEQUENCE [LARGE SCALE MRNA]</scope>
    <source>
        <strain>C57BL/6J</strain>
        <tissue>Cerebellum</tissue>
    </source>
</reference>
<reference key="2">
    <citation type="journal article" date="2009" name="PLoS Biol.">
        <title>Lineage-specific biology revealed by a finished genome assembly of the mouse.</title>
        <authorList>
            <person name="Church D.M."/>
            <person name="Goodstadt L."/>
            <person name="Hillier L.W."/>
            <person name="Zody M.C."/>
            <person name="Goldstein S."/>
            <person name="She X."/>
            <person name="Bult C.J."/>
            <person name="Agarwala R."/>
            <person name="Cherry J.L."/>
            <person name="DiCuccio M."/>
            <person name="Hlavina W."/>
            <person name="Kapustin Y."/>
            <person name="Meric P."/>
            <person name="Maglott D."/>
            <person name="Birtle Z."/>
            <person name="Marques A.C."/>
            <person name="Graves T."/>
            <person name="Zhou S."/>
            <person name="Teague B."/>
            <person name="Potamousis K."/>
            <person name="Churas C."/>
            <person name="Place M."/>
            <person name="Herschleb J."/>
            <person name="Runnheim R."/>
            <person name="Forrest D."/>
            <person name="Amos-Landgraf J."/>
            <person name="Schwartz D.C."/>
            <person name="Cheng Z."/>
            <person name="Lindblad-Toh K."/>
            <person name="Eichler E.E."/>
            <person name="Ponting C.P."/>
        </authorList>
    </citation>
    <scope>NUCLEOTIDE SEQUENCE [LARGE SCALE GENOMIC DNA]</scope>
    <source>
        <strain>C57BL/6J</strain>
    </source>
</reference>
<reference key="3">
    <citation type="journal article" date="2004" name="Genome Res.">
        <title>The status, quality, and expansion of the NIH full-length cDNA project: the Mammalian Gene Collection (MGC).</title>
        <authorList>
            <consortium name="The MGC Project Team"/>
        </authorList>
    </citation>
    <scope>NUCLEOTIDE SEQUENCE [LARGE SCALE MRNA]</scope>
    <source>
        <strain>Czech II</strain>
        <tissue>Mammary tumor</tissue>
    </source>
</reference>
<reference key="4">
    <citation type="journal article" date="2015" name="Nat. Commun.">
        <title>Functional genomics identifies negative regulatory nodes controlling phagocyte oxidative burst.</title>
        <authorList>
            <person name="Graham D.B."/>
            <person name="Becker C.E."/>
            <person name="Doan A."/>
            <person name="Goel G."/>
            <person name="Villablanca E.J."/>
            <person name="Knights D."/>
            <person name="Mok A."/>
            <person name="Ng A.C."/>
            <person name="Doench J.G."/>
            <person name="Root D.E."/>
            <person name="Clish C.B."/>
            <person name="Xavier R.J."/>
        </authorList>
    </citation>
    <scope>FUNCTION</scope>
    <scope>SUBCELLULAR LOCATION</scope>
</reference>
<reference key="5">
    <citation type="journal article" date="2017" name="Elife">
        <title>Inhibition of cholesterol biosynthesis through RNF145-dependent ubiquitination of SCAP.</title>
        <authorList>
            <person name="Zhang L."/>
            <person name="Rajbhandari P."/>
            <person name="Priest C."/>
            <person name="Sandhu J."/>
            <person name="Wu X."/>
            <person name="Temel R."/>
            <person name="Castrillo A."/>
            <person name="de Aguiar Vallim T.Q."/>
            <person name="Sallam T."/>
            <person name="Tontonoz P."/>
        </authorList>
    </citation>
    <scope>CATALYTIC ACTIVITY</scope>
    <scope>FUNCTION</scope>
    <scope>SUBCELLULAR LOCATION</scope>
    <scope>INDUCTION BY CHOLESTEROL</scope>
    <scope>DISRUPTION PHENOTYPE</scope>
    <scope>ACTIVE SITE</scope>
    <scope>MUTAGENESIS OF CYS-537</scope>
</reference>
<reference key="6">
    <citation type="journal article" date="2018" name="J. Biol. Chem.">
        <title>Ring finger protein 145 (RNF145) is a ubiquitin ligase for sterol-induced degradation of HMG-CoA reductase.</title>
        <authorList>
            <person name="Jiang L.Y."/>
            <person name="Jiang W."/>
            <person name="Tian N."/>
            <person name="Xiong Y.N."/>
            <person name="Liu J."/>
            <person name="Wei J."/>
            <person name="Wu K.Y."/>
            <person name="Luo J."/>
            <person name="Shi X.J."/>
            <person name="Song B.L."/>
        </authorList>
    </citation>
    <scope>FUNCTION</scope>
    <scope>CATALYTIC ACTIVITY</scope>
    <scope>SUBCELLULAR LOCATION</scope>
    <scope>INTERACTION WITH INSIG1 AND INSIG2</scope>
    <scope>MUTAGENESIS OF 81-TYR--PHE-84 AND CYS-537</scope>
</reference>
<proteinExistence type="evidence at protein level"/>
<dbReference type="EC" id="2.3.2.27" evidence="5 6"/>
<dbReference type="EMBL" id="AK014408">
    <property type="protein sequence ID" value="BAB29332.1"/>
    <property type="molecule type" value="mRNA"/>
</dbReference>
<dbReference type="EMBL" id="AK043002">
    <property type="protein sequence ID" value="BAC31431.1"/>
    <property type="molecule type" value="mRNA"/>
</dbReference>
<dbReference type="EMBL" id="AL603913">
    <property type="status" value="NOT_ANNOTATED_CDS"/>
    <property type="molecule type" value="Genomic_DNA"/>
</dbReference>
<dbReference type="EMBL" id="BC040799">
    <property type="protein sequence ID" value="AAH40799.1"/>
    <property type="molecule type" value="mRNA"/>
</dbReference>
<dbReference type="CCDS" id="CCDS24565.1"/>
<dbReference type="RefSeq" id="NP_001350095.1">
    <property type="nucleotide sequence ID" value="NM_001363166.1"/>
</dbReference>
<dbReference type="RefSeq" id="NP_083138.2">
    <property type="nucleotide sequence ID" value="NM_028862.4"/>
</dbReference>
<dbReference type="RefSeq" id="XP_006534419.1">
    <property type="nucleotide sequence ID" value="XM_006534356.2"/>
</dbReference>
<dbReference type="RefSeq" id="XP_006534420.1">
    <property type="nucleotide sequence ID" value="XM_006534357.3"/>
</dbReference>
<dbReference type="RefSeq" id="XP_006534421.1">
    <property type="nucleotide sequence ID" value="XM_006534358.4"/>
</dbReference>
<dbReference type="FunCoup" id="Q5SWK7">
    <property type="interactions" value="1919"/>
</dbReference>
<dbReference type="STRING" id="10090.ENSMUSP00000019333"/>
<dbReference type="iPTMnet" id="Q5SWK7"/>
<dbReference type="PhosphoSitePlus" id="Q5SWK7"/>
<dbReference type="PaxDb" id="10090-ENSMUSP00000019333"/>
<dbReference type="ProteomicsDB" id="301613"/>
<dbReference type="Antibodypedia" id="28490">
    <property type="antibodies" value="90 antibodies from 17 providers"/>
</dbReference>
<dbReference type="DNASU" id="74315"/>
<dbReference type="Ensembl" id="ENSMUST00000019333.10">
    <property type="protein sequence ID" value="ENSMUSP00000019333.4"/>
    <property type="gene ID" value="ENSMUSG00000019189.14"/>
</dbReference>
<dbReference type="GeneID" id="74315"/>
<dbReference type="KEGG" id="mmu:74315"/>
<dbReference type="UCSC" id="uc007inh.2">
    <property type="organism name" value="mouse"/>
</dbReference>
<dbReference type="AGR" id="MGI:1921565"/>
<dbReference type="CTD" id="153830"/>
<dbReference type="MGI" id="MGI:1921565">
    <property type="gene designation" value="Rnf145"/>
</dbReference>
<dbReference type="VEuPathDB" id="HostDB:ENSMUSG00000019189"/>
<dbReference type="eggNOG" id="KOG0802">
    <property type="taxonomic scope" value="Eukaryota"/>
</dbReference>
<dbReference type="GeneTree" id="ENSGT00940000157281"/>
<dbReference type="HOGENOM" id="CLU_016467_1_0_1"/>
<dbReference type="InParanoid" id="Q5SWK7"/>
<dbReference type="OMA" id="MHSAPLH"/>
<dbReference type="OrthoDB" id="4752984at2759"/>
<dbReference type="PhylomeDB" id="Q5SWK7"/>
<dbReference type="TreeFam" id="TF318635"/>
<dbReference type="BioGRID-ORCS" id="74315">
    <property type="hits" value="6 hits in 78 CRISPR screens"/>
</dbReference>
<dbReference type="ChiTaRS" id="Rnf145">
    <property type="organism name" value="mouse"/>
</dbReference>
<dbReference type="PRO" id="PR:Q5SWK7"/>
<dbReference type="Proteomes" id="UP000000589">
    <property type="component" value="Chromosome 11"/>
</dbReference>
<dbReference type="RNAct" id="Q5SWK7">
    <property type="molecule type" value="protein"/>
</dbReference>
<dbReference type="Bgee" id="ENSMUSG00000019189">
    <property type="expression patterns" value="Expressed in superior cervical ganglion and 261 other cell types or tissues"/>
</dbReference>
<dbReference type="ExpressionAtlas" id="Q5SWK7">
    <property type="expression patterns" value="baseline and differential"/>
</dbReference>
<dbReference type="GO" id="GO:0005789">
    <property type="term" value="C:endoplasmic reticulum membrane"/>
    <property type="evidence" value="ECO:0007669"/>
    <property type="project" value="UniProtKB-SubCell"/>
</dbReference>
<dbReference type="GO" id="GO:0016740">
    <property type="term" value="F:transferase activity"/>
    <property type="evidence" value="ECO:0007669"/>
    <property type="project" value="UniProtKB-KW"/>
</dbReference>
<dbReference type="GO" id="GO:0008270">
    <property type="term" value="F:zinc ion binding"/>
    <property type="evidence" value="ECO:0007669"/>
    <property type="project" value="UniProtKB-KW"/>
</dbReference>
<dbReference type="CDD" id="cd16684">
    <property type="entry name" value="RING-H2_RNF145"/>
    <property type="match status" value="1"/>
</dbReference>
<dbReference type="FunFam" id="3.30.40.10:FF:000145">
    <property type="entry name" value="RING finger protein 145"/>
    <property type="match status" value="1"/>
</dbReference>
<dbReference type="Gene3D" id="3.30.40.10">
    <property type="entry name" value="Zinc/RING finger domain, C3HC4 (zinc finger)"/>
    <property type="match status" value="1"/>
</dbReference>
<dbReference type="InterPro" id="IPR050731">
    <property type="entry name" value="HRD1_E3_ubiq-ligases"/>
</dbReference>
<dbReference type="InterPro" id="IPR047823">
    <property type="entry name" value="RNF145_RING-H2"/>
</dbReference>
<dbReference type="InterPro" id="IPR025754">
    <property type="entry name" value="TRC8_N_dom"/>
</dbReference>
<dbReference type="InterPro" id="IPR001841">
    <property type="entry name" value="Znf_RING"/>
</dbReference>
<dbReference type="InterPro" id="IPR011016">
    <property type="entry name" value="Znf_RING-CH"/>
</dbReference>
<dbReference type="InterPro" id="IPR013083">
    <property type="entry name" value="Znf_RING/FYVE/PHD"/>
</dbReference>
<dbReference type="PANTHER" id="PTHR22763:SF167">
    <property type="entry name" value="RING FINGER PROTEIN 145"/>
    <property type="match status" value="1"/>
</dbReference>
<dbReference type="PANTHER" id="PTHR22763">
    <property type="entry name" value="RING ZINC FINGER PROTEIN"/>
    <property type="match status" value="1"/>
</dbReference>
<dbReference type="Pfam" id="PF13705">
    <property type="entry name" value="TRC8_N"/>
    <property type="match status" value="1"/>
</dbReference>
<dbReference type="Pfam" id="PF13639">
    <property type="entry name" value="zf-RING_2"/>
    <property type="match status" value="1"/>
</dbReference>
<dbReference type="SMART" id="SM00184">
    <property type="entry name" value="RING"/>
    <property type="match status" value="1"/>
</dbReference>
<dbReference type="SMART" id="SM00744">
    <property type="entry name" value="RINGv"/>
    <property type="match status" value="1"/>
</dbReference>
<dbReference type="SUPFAM" id="SSF57850">
    <property type="entry name" value="RING/U-box"/>
    <property type="match status" value="1"/>
</dbReference>
<dbReference type="PROSITE" id="PS50089">
    <property type="entry name" value="ZF_RING_2"/>
    <property type="match status" value="1"/>
</dbReference>
<feature type="chain" id="PRO_0000294025" description="RING finger protein 145">
    <location>
        <begin position="1"/>
        <end position="663"/>
    </location>
</feature>
<feature type="transmembrane region" description="Helical" evidence="1">
    <location>
        <begin position="53"/>
        <end position="73"/>
    </location>
</feature>
<feature type="transmembrane region" description="Helical" evidence="1">
    <location>
        <begin position="77"/>
        <end position="97"/>
    </location>
</feature>
<feature type="transmembrane region" description="Helical" evidence="1">
    <location>
        <begin position="123"/>
        <end position="143"/>
    </location>
</feature>
<feature type="transmembrane region" description="Helical" evidence="1">
    <location>
        <begin position="146"/>
        <end position="166"/>
    </location>
</feature>
<feature type="transmembrane region" description="Helical" evidence="1">
    <location>
        <begin position="168"/>
        <end position="188"/>
    </location>
</feature>
<feature type="transmembrane region" description="Helical" evidence="1">
    <location>
        <begin position="205"/>
        <end position="222"/>
    </location>
</feature>
<feature type="transmembrane region" description="Helical" evidence="1">
    <location>
        <begin position="225"/>
        <end position="245"/>
    </location>
</feature>
<feature type="transmembrane region" description="Helical" evidence="1">
    <location>
        <begin position="275"/>
        <end position="295"/>
    </location>
</feature>
<feature type="transmembrane region" description="Helical" evidence="1">
    <location>
        <begin position="316"/>
        <end position="336"/>
    </location>
</feature>
<feature type="transmembrane region" description="Helical" evidence="1">
    <location>
        <begin position="340"/>
        <end position="360"/>
    </location>
</feature>
<feature type="transmembrane region" description="Helical" evidence="1">
    <location>
        <begin position="384"/>
        <end position="404"/>
    </location>
</feature>
<feature type="transmembrane region" description="Helical" evidence="1">
    <location>
        <begin position="410"/>
        <end position="430"/>
    </location>
</feature>
<feature type="transmembrane region" description="Helical" evidence="1">
    <location>
        <begin position="460"/>
        <end position="480"/>
    </location>
</feature>
<feature type="transmembrane region" description="Helical" evidence="1">
    <location>
        <begin position="482"/>
        <end position="502"/>
    </location>
</feature>
<feature type="zinc finger region" description="RING-type; atypical" evidence="2">
    <location>
        <begin position="537"/>
        <end position="575"/>
    </location>
</feature>
<feature type="region of interest" description="Disordered" evidence="3">
    <location>
        <begin position="587"/>
        <end position="663"/>
    </location>
</feature>
<feature type="short sequence motif" description="YLYF motif" evidence="6">
    <location>
        <begin position="81"/>
        <end position="84"/>
    </location>
</feature>
<feature type="compositionally biased region" description="Polar residues" evidence="3">
    <location>
        <begin position="619"/>
        <end position="628"/>
    </location>
</feature>
<feature type="active site" evidence="5">
    <location>
        <position position="537"/>
    </location>
</feature>
<feature type="mutagenesis site" description="Impairs interaction with INSIG1." evidence="6">
    <original>YLYF</original>
    <variation>AAAA</variation>
    <location>
        <begin position="81"/>
        <end position="84"/>
    </location>
</feature>
<feature type="mutagenesis site" description="Abolishes E3 ubiquitin ligase activity. Impairs ubiquitination of SCAP and functional regulation of cholesterol biosynthesis. Impairs sterol-induced ubiquitination and degradation of HMGCR." evidence="5 6">
    <original>C</original>
    <variation>A</variation>
    <location>
        <position position="537"/>
    </location>
</feature>
<feature type="sequence conflict" description="In Ref. 1; BAB29332." evidence="8" ref="1">
    <original>I</original>
    <variation>V</variation>
    <location>
        <position position="38"/>
    </location>
</feature>
<feature type="sequence conflict" description="In Ref. 1; BAC31431." evidence="8" ref="1">
    <original>V</original>
    <variation>G</variation>
    <location>
        <position position="68"/>
    </location>
</feature>
<feature type="sequence conflict" description="In Ref. 1; BAB29332." evidence="8" ref="1">
    <original>Y</original>
    <variation>C</variation>
    <location>
        <position position="91"/>
    </location>
</feature>
<feature type="sequence conflict" description="In Ref. 1; BAB29332." evidence="8" ref="1">
    <original>F</original>
    <variation>S</variation>
    <location>
        <position position="123"/>
    </location>
</feature>
<feature type="sequence conflict" description="In Ref. 1; BAB29332." evidence="8" ref="1">
    <original>V</original>
    <variation>I</variation>
    <location>
        <position position="350"/>
    </location>
</feature>
<feature type="sequence conflict" description="In Ref. 1; BAB29332." evidence="8" ref="1">
    <original>D</original>
    <variation>E</variation>
    <location>
        <position position="448"/>
    </location>
</feature>
<organism>
    <name type="scientific">Mus musculus</name>
    <name type="common">Mouse</name>
    <dbReference type="NCBI Taxonomy" id="10090"/>
    <lineage>
        <taxon>Eukaryota</taxon>
        <taxon>Metazoa</taxon>
        <taxon>Chordata</taxon>
        <taxon>Craniata</taxon>
        <taxon>Vertebrata</taxon>
        <taxon>Euteleostomi</taxon>
        <taxon>Mammalia</taxon>
        <taxon>Eutheria</taxon>
        <taxon>Euarchontoglires</taxon>
        <taxon>Glires</taxon>
        <taxon>Rodentia</taxon>
        <taxon>Myomorpha</taxon>
        <taxon>Muroidea</taxon>
        <taxon>Muridae</taxon>
        <taxon>Murinae</taxon>
        <taxon>Mus</taxon>
        <taxon>Mus</taxon>
    </lineage>
</organism>
<comment type="function">
    <text evidence="4 5 6">E3 ubiquitin ligase that catalyzes the direct transfer of ubiquitin from E2 ubiquitin-conjugating enzyme to a specific substrate. In response to bacterial infection, negatively regulates the phagocyte oxidative burst by controlling the turnover of the NADPH oxidase complex subunits. Promotes monoubiquitination of CYBA and 'Lys-48'-linked polyubiquitination and degradation of CYBB NADPH oxidase catalytic subunits, both essential for the generation of antimicrobial reactive oxygen species (PubMed:26194095). Involved in the maintenance of cholesterol homeostasis. In response to high sterol concentrations ubiquitinates HMGCR, a rate-limiting enzyme in cholesterol biosynthesis, and targets it for degradation. The interaction with INSIG1 is required for this function (PubMed:29374057). In addition, triggers ubiquitination of SCAP, likely inhibiting its transport to the Golgi apparatus and the subsequent processing/maturation of SREBPF2, ultimately down-regulating cholesterol biosynthesis (PubMed:29068315).</text>
</comment>
<comment type="catalytic activity">
    <reaction evidence="5 6">
        <text>S-ubiquitinyl-[E2 ubiquitin-conjugating enzyme]-L-cysteine + [acceptor protein]-L-lysine = [E2 ubiquitin-conjugating enzyme]-L-cysteine + N(6)-ubiquitinyl-[acceptor protein]-L-lysine.</text>
        <dbReference type="EC" id="2.3.2.27"/>
    </reaction>
</comment>
<comment type="subunit">
    <text evidence="6">Interacts (via YLYF motif) with INSIG1 and INSIG2.</text>
</comment>
<comment type="subcellular location">
    <subcellularLocation>
        <location evidence="4 5 6">Endoplasmic reticulum membrane</location>
        <topology evidence="1">Multi-pass membrane protein</topology>
    </subcellularLocation>
</comment>
<comment type="induction">
    <text evidence="5">By high-cholesterol diet.</text>
</comment>
<comment type="disruption phenotype">
    <text evidence="5">Knockout mice generated by CRISPR-Cas9-mediated gene editing are born at the expected Mendelian rate. Compared to wild-type littermates, mutant mice show slightly reduced body weight and increased serum cholesterol levels.</text>
</comment>
<evidence type="ECO:0000255" key="1"/>
<evidence type="ECO:0000255" key="2">
    <source>
        <dbReference type="PROSITE-ProRule" id="PRU00175"/>
    </source>
</evidence>
<evidence type="ECO:0000256" key="3">
    <source>
        <dbReference type="SAM" id="MobiDB-lite"/>
    </source>
</evidence>
<evidence type="ECO:0000269" key="4">
    <source>
    </source>
</evidence>
<evidence type="ECO:0000269" key="5">
    <source>
    </source>
</evidence>
<evidence type="ECO:0000269" key="6">
    <source>
    </source>
</evidence>
<evidence type="ECO:0000303" key="7">
    <source>
    </source>
</evidence>
<evidence type="ECO:0000305" key="8"/>
<evidence type="ECO:0000312" key="9">
    <source>
        <dbReference type="MGI" id="MGI:1921565"/>
    </source>
</evidence>
<name>RN145_MOUSE</name>
<accession>Q5SWK7</accession>
<accession>Q8BXX5</accession>
<accession>Q9CXG1</accession>
<protein>
    <recommendedName>
        <fullName evidence="7">RING finger protein 145</fullName>
        <ecNumber evidence="5 6">2.3.2.27</ecNumber>
    </recommendedName>
</protein>
<keyword id="KW-0256">Endoplasmic reticulum</keyword>
<keyword id="KW-0472">Membrane</keyword>
<keyword id="KW-0479">Metal-binding</keyword>
<keyword id="KW-1185">Reference proteome</keyword>
<keyword id="KW-0808">Transferase</keyword>
<keyword id="KW-0812">Transmembrane</keyword>
<keyword id="KW-1133">Transmembrane helix</keyword>
<keyword id="KW-0833">Ubl conjugation pathway</keyword>
<keyword id="KW-0862">Zinc</keyword>
<keyword id="KW-0863">Zinc-finger</keyword>